<comment type="function">
    <text evidence="1">Binds as a heterodimer with protein bS6 to the central domain of the 16S rRNA, where it helps stabilize the platform of the 30S subunit.</text>
</comment>
<comment type="subunit">
    <text evidence="1">Part of the 30S ribosomal subunit. Forms a tight heterodimer with protein bS6.</text>
</comment>
<comment type="similarity">
    <text evidence="1">Belongs to the bacterial ribosomal protein bS18 family.</text>
</comment>
<keyword id="KW-0687">Ribonucleoprotein</keyword>
<keyword id="KW-0689">Ribosomal protein</keyword>
<keyword id="KW-0694">RNA-binding</keyword>
<keyword id="KW-0699">rRNA-binding</keyword>
<evidence type="ECO:0000255" key="1">
    <source>
        <dbReference type="HAMAP-Rule" id="MF_00270"/>
    </source>
</evidence>
<evidence type="ECO:0000305" key="2"/>
<gene>
    <name evidence="1" type="primary">rpsR</name>
    <name type="ordered locus">RC0065</name>
</gene>
<feature type="chain" id="PRO_0000111217" description="Small ribosomal subunit protein bS18">
    <location>
        <begin position="1"/>
        <end position="95"/>
    </location>
</feature>
<name>RS18_RICCN</name>
<reference key="1">
    <citation type="journal article" date="2001" name="Science">
        <title>Mechanisms of evolution in Rickettsia conorii and R. prowazekii.</title>
        <authorList>
            <person name="Ogata H."/>
            <person name="Audic S."/>
            <person name="Renesto-Audiffren P."/>
            <person name="Fournier P.-E."/>
            <person name="Barbe V."/>
            <person name="Samson D."/>
            <person name="Roux V."/>
            <person name="Cossart P."/>
            <person name="Weissenbach J."/>
            <person name="Claverie J.-M."/>
            <person name="Raoult D."/>
        </authorList>
    </citation>
    <scope>NUCLEOTIDE SEQUENCE [LARGE SCALE GENOMIC DNA]</scope>
    <source>
        <strain>ATCC VR-613 / Malish 7</strain>
    </source>
</reference>
<accession>Q92JK2</accession>
<protein>
    <recommendedName>
        <fullName evidence="1">Small ribosomal subunit protein bS18</fullName>
    </recommendedName>
    <alternativeName>
        <fullName evidence="2">30S ribosomal protein S18</fullName>
    </alternativeName>
</protein>
<sequence>MLKSNNASETAAHKVGDKTAKKVFFRRRKGCPLSVPNAPVIDYKNPELLIKFVSEGGRMLPSRITNVCAKKQRKLNNAIKIARILALLPFVFQAK</sequence>
<organism>
    <name type="scientific">Rickettsia conorii (strain ATCC VR-613 / Malish 7)</name>
    <dbReference type="NCBI Taxonomy" id="272944"/>
    <lineage>
        <taxon>Bacteria</taxon>
        <taxon>Pseudomonadati</taxon>
        <taxon>Pseudomonadota</taxon>
        <taxon>Alphaproteobacteria</taxon>
        <taxon>Rickettsiales</taxon>
        <taxon>Rickettsiaceae</taxon>
        <taxon>Rickettsieae</taxon>
        <taxon>Rickettsia</taxon>
        <taxon>spotted fever group</taxon>
    </lineage>
</organism>
<dbReference type="EMBL" id="AE006914">
    <property type="protein sequence ID" value="AAL02603.1"/>
    <property type="molecule type" value="Genomic_DNA"/>
</dbReference>
<dbReference type="PIR" id="A97708">
    <property type="entry name" value="A97708"/>
</dbReference>
<dbReference type="RefSeq" id="WP_004996865.1">
    <property type="nucleotide sequence ID" value="NC_003103.1"/>
</dbReference>
<dbReference type="SMR" id="Q92JK2"/>
<dbReference type="GeneID" id="95361797"/>
<dbReference type="KEGG" id="rco:RC0065"/>
<dbReference type="HOGENOM" id="CLU_148710_2_1_5"/>
<dbReference type="Proteomes" id="UP000000816">
    <property type="component" value="Chromosome"/>
</dbReference>
<dbReference type="GO" id="GO:0022627">
    <property type="term" value="C:cytosolic small ribosomal subunit"/>
    <property type="evidence" value="ECO:0007669"/>
    <property type="project" value="TreeGrafter"/>
</dbReference>
<dbReference type="GO" id="GO:0070181">
    <property type="term" value="F:small ribosomal subunit rRNA binding"/>
    <property type="evidence" value="ECO:0007669"/>
    <property type="project" value="TreeGrafter"/>
</dbReference>
<dbReference type="GO" id="GO:0003735">
    <property type="term" value="F:structural constituent of ribosome"/>
    <property type="evidence" value="ECO:0007669"/>
    <property type="project" value="InterPro"/>
</dbReference>
<dbReference type="GO" id="GO:0006412">
    <property type="term" value="P:translation"/>
    <property type="evidence" value="ECO:0007669"/>
    <property type="project" value="UniProtKB-UniRule"/>
</dbReference>
<dbReference type="Gene3D" id="4.10.640.10">
    <property type="entry name" value="Ribosomal protein S18"/>
    <property type="match status" value="1"/>
</dbReference>
<dbReference type="HAMAP" id="MF_00270">
    <property type="entry name" value="Ribosomal_bS18"/>
    <property type="match status" value="1"/>
</dbReference>
<dbReference type="InterPro" id="IPR001648">
    <property type="entry name" value="Ribosomal_bS18"/>
</dbReference>
<dbReference type="InterPro" id="IPR018275">
    <property type="entry name" value="Ribosomal_bS18_CS"/>
</dbReference>
<dbReference type="InterPro" id="IPR036870">
    <property type="entry name" value="Ribosomal_bS18_sf"/>
</dbReference>
<dbReference type="NCBIfam" id="TIGR00165">
    <property type="entry name" value="S18"/>
    <property type="match status" value="1"/>
</dbReference>
<dbReference type="PANTHER" id="PTHR13479">
    <property type="entry name" value="30S RIBOSOMAL PROTEIN S18"/>
    <property type="match status" value="1"/>
</dbReference>
<dbReference type="PANTHER" id="PTHR13479:SF40">
    <property type="entry name" value="SMALL RIBOSOMAL SUBUNIT PROTEIN BS18M"/>
    <property type="match status" value="1"/>
</dbReference>
<dbReference type="Pfam" id="PF01084">
    <property type="entry name" value="Ribosomal_S18"/>
    <property type="match status" value="1"/>
</dbReference>
<dbReference type="PRINTS" id="PR00974">
    <property type="entry name" value="RIBOSOMALS18"/>
</dbReference>
<dbReference type="SUPFAM" id="SSF46911">
    <property type="entry name" value="Ribosomal protein S18"/>
    <property type="match status" value="1"/>
</dbReference>
<dbReference type="PROSITE" id="PS00057">
    <property type="entry name" value="RIBOSOMAL_S18"/>
    <property type="match status" value="1"/>
</dbReference>
<proteinExistence type="inferred from homology"/>